<evidence type="ECO:0000255" key="1">
    <source>
        <dbReference type="HAMAP-Rule" id="MF_00385"/>
    </source>
</evidence>
<evidence type="ECO:0000305" key="2"/>
<feature type="chain" id="PRO_1000196422" description="Small ribosomal subunit protein bS16">
    <location>
        <begin position="1"/>
        <end position="91"/>
    </location>
</feature>
<dbReference type="EMBL" id="FM177140">
    <property type="protein sequence ID" value="CAQ66895.1"/>
    <property type="molecule type" value="Genomic_DNA"/>
</dbReference>
<dbReference type="SMR" id="B3WEU4"/>
<dbReference type="KEGG" id="lcb:LCABL_18150"/>
<dbReference type="HOGENOM" id="CLU_100590_5_0_9"/>
<dbReference type="GO" id="GO:0005737">
    <property type="term" value="C:cytoplasm"/>
    <property type="evidence" value="ECO:0007669"/>
    <property type="project" value="UniProtKB-ARBA"/>
</dbReference>
<dbReference type="GO" id="GO:0015935">
    <property type="term" value="C:small ribosomal subunit"/>
    <property type="evidence" value="ECO:0007669"/>
    <property type="project" value="TreeGrafter"/>
</dbReference>
<dbReference type="GO" id="GO:0003735">
    <property type="term" value="F:structural constituent of ribosome"/>
    <property type="evidence" value="ECO:0007669"/>
    <property type="project" value="InterPro"/>
</dbReference>
<dbReference type="GO" id="GO:0006412">
    <property type="term" value="P:translation"/>
    <property type="evidence" value="ECO:0007669"/>
    <property type="project" value="UniProtKB-UniRule"/>
</dbReference>
<dbReference type="FunFam" id="3.30.1320.10:FF:000002">
    <property type="entry name" value="30S ribosomal protein S16"/>
    <property type="match status" value="1"/>
</dbReference>
<dbReference type="Gene3D" id="3.30.1320.10">
    <property type="match status" value="1"/>
</dbReference>
<dbReference type="HAMAP" id="MF_00385">
    <property type="entry name" value="Ribosomal_bS16"/>
    <property type="match status" value="1"/>
</dbReference>
<dbReference type="InterPro" id="IPR000307">
    <property type="entry name" value="Ribosomal_bS16"/>
</dbReference>
<dbReference type="InterPro" id="IPR023803">
    <property type="entry name" value="Ribosomal_bS16_dom_sf"/>
</dbReference>
<dbReference type="NCBIfam" id="TIGR00002">
    <property type="entry name" value="S16"/>
    <property type="match status" value="1"/>
</dbReference>
<dbReference type="PANTHER" id="PTHR12919">
    <property type="entry name" value="30S RIBOSOMAL PROTEIN S16"/>
    <property type="match status" value="1"/>
</dbReference>
<dbReference type="PANTHER" id="PTHR12919:SF20">
    <property type="entry name" value="SMALL RIBOSOMAL SUBUNIT PROTEIN BS16M"/>
    <property type="match status" value="1"/>
</dbReference>
<dbReference type="Pfam" id="PF00886">
    <property type="entry name" value="Ribosomal_S16"/>
    <property type="match status" value="1"/>
</dbReference>
<dbReference type="SUPFAM" id="SSF54565">
    <property type="entry name" value="Ribosomal protein S16"/>
    <property type="match status" value="1"/>
</dbReference>
<protein>
    <recommendedName>
        <fullName evidence="1">Small ribosomal subunit protein bS16</fullName>
    </recommendedName>
    <alternativeName>
        <fullName evidence="2">30S ribosomal protein S16</fullName>
    </alternativeName>
</protein>
<gene>
    <name evidence="1" type="primary">rpsP</name>
    <name type="ordered locus">LCABL_18150</name>
</gene>
<proteinExistence type="inferred from homology"/>
<comment type="similarity">
    <text evidence="1">Belongs to the bacterial ribosomal protein bS16 family.</text>
</comment>
<organism>
    <name type="scientific">Lacticaseibacillus casei (strain BL23)</name>
    <name type="common">Lactobacillus casei</name>
    <dbReference type="NCBI Taxonomy" id="543734"/>
    <lineage>
        <taxon>Bacteria</taxon>
        <taxon>Bacillati</taxon>
        <taxon>Bacillota</taxon>
        <taxon>Bacilli</taxon>
        <taxon>Lactobacillales</taxon>
        <taxon>Lactobacillaceae</taxon>
        <taxon>Lacticaseibacillus</taxon>
    </lineage>
</organism>
<sequence>MAVKIRLKRMGSKRKPFYRIVVADSRSPRDGRFIEAVGYYNPLTNPVDLKLNEEDILNWLQKGAQPSDTVRNLLGSKGIMQKYHEARFAKK</sequence>
<accession>B3WEU4</accession>
<name>RS16_LACCB</name>
<reference key="1">
    <citation type="submission" date="2008-06" db="EMBL/GenBank/DDBJ databases">
        <title>Lactobacillus casei BL23 complete genome sequence.</title>
        <authorList>
            <person name="Maze A."/>
            <person name="Boel G."/>
            <person name="Bourand A."/>
            <person name="Loux V."/>
            <person name="Gibrat J.F."/>
            <person name="Zuniga M."/>
            <person name="Hartke A."/>
            <person name="Deutscher J."/>
        </authorList>
    </citation>
    <scope>NUCLEOTIDE SEQUENCE [LARGE SCALE GENOMIC DNA]</scope>
    <source>
        <strain>BL23</strain>
    </source>
</reference>
<keyword id="KW-0687">Ribonucleoprotein</keyword>
<keyword id="KW-0689">Ribosomal protein</keyword>